<evidence type="ECO:0000255" key="1">
    <source>
        <dbReference type="HAMAP-Rule" id="MF_00337"/>
    </source>
</evidence>
<reference key="1">
    <citation type="journal article" date="2003" name="Lancet">
        <title>Genome sequence of Vibrio parahaemolyticus: a pathogenic mechanism distinct from that of V. cholerae.</title>
        <authorList>
            <person name="Makino K."/>
            <person name="Oshima K."/>
            <person name="Kurokawa K."/>
            <person name="Yokoyama K."/>
            <person name="Uda T."/>
            <person name="Tagomori K."/>
            <person name="Iijima Y."/>
            <person name="Najima M."/>
            <person name="Nakano M."/>
            <person name="Yamashita A."/>
            <person name="Kubota Y."/>
            <person name="Kimura S."/>
            <person name="Yasunaga T."/>
            <person name="Honda T."/>
            <person name="Shinagawa H."/>
            <person name="Hattori M."/>
            <person name="Iida T."/>
        </authorList>
    </citation>
    <scope>NUCLEOTIDE SEQUENCE [LARGE SCALE GENOMIC DNA]</scope>
    <source>
        <strain>RIMD 2210633</strain>
    </source>
</reference>
<feature type="chain" id="PRO_0000207030" description="Exodeoxyribonuclease 7 small subunit">
    <location>
        <begin position="1"/>
        <end position="80"/>
    </location>
</feature>
<protein>
    <recommendedName>
        <fullName evidence="1">Exodeoxyribonuclease 7 small subunit</fullName>
        <ecNumber evidence="1">3.1.11.6</ecNumber>
    </recommendedName>
    <alternativeName>
        <fullName evidence="1">Exodeoxyribonuclease VII small subunit</fullName>
        <shortName evidence="1">Exonuclease VII small subunit</shortName>
    </alternativeName>
</protein>
<proteinExistence type="inferred from homology"/>
<comment type="function">
    <text evidence="1">Bidirectionally degrades single-stranded DNA into large acid-insoluble oligonucleotides, which are then degraded further into small acid-soluble oligonucleotides.</text>
</comment>
<comment type="catalytic activity">
    <reaction evidence="1">
        <text>Exonucleolytic cleavage in either 5'- to 3'- or 3'- to 5'-direction to yield nucleoside 5'-phosphates.</text>
        <dbReference type="EC" id="3.1.11.6"/>
    </reaction>
</comment>
<comment type="subunit">
    <text evidence="1">Heterooligomer composed of large and small subunits.</text>
</comment>
<comment type="subcellular location">
    <subcellularLocation>
        <location evidence="1">Cytoplasm</location>
    </subcellularLocation>
</comment>
<comment type="similarity">
    <text evidence="1">Belongs to the XseB family.</text>
</comment>
<sequence length="80" mass="8879">MAVKKPENMTFEATIEELDSLVDQLENGDLALDDALRKFERGIALARAGQTKLSDAEQRVSILLSEDDEAPLNDFKPDSE</sequence>
<dbReference type="EC" id="3.1.11.6" evidence="1"/>
<dbReference type="EMBL" id="BA000031">
    <property type="protein sequence ID" value="BAC58951.1"/>
    <property type="molecule type" value="Genomic_DNA"/>
</dbReference>
<dbReference type="RefSeq" id="NP_797067.1">
    <property type="nucleotide sequence ID" value="NC_004603.1"/>
</dbReference>
<dbReference type="RefSeq" id="WP_005483079.1">
    <property type="nucleotide sequence ID" value="NC_004603.1"/>
</dbReference>
<dbReference type="SMR" id="Q87RT8"/>
<dbReference type="GeneID" id="1188163"/>
<dbReference type="KEGG" id="vpa:VP0688"/>
<dbReference type="PATRIC" id="fig|223926.6.peg.656"/>
<dbReference type="eggNOG" id="COG1722">
    <property type="taxonomic scope" value="Bacteria"/>
</dbReference>
<dbReference type="HOGENOM" id="CLU_145918_3_3_6"/>
<dbReference type="Proteomes" id="UP000002493">
    <property type="component" value="Chromosome 1"/>
</dbReference>
<dbReference type="GO" id="GO:0005829">
    <property type="term" value="C:cytosol"/>
    <property type="evidence" value="ECO:0007669"/>
    <property type="project" value="TreeGrafter"/>
</dbReference>
<dbReference type="GO" id="GO:0009318">
    <property type="term" value="C:exodeoxyribonuclease VII complex"/>
    <property type="evidence" value="ECO:0007669"/>
    <property type="project" value="InterPro"/>
</dbReference>
<dbReference type="GO" id="GO:0008855">
    <property type="term" value="F:exodeoxyribonuclease VII activity"/>
    <property type="evidence" value="ECO:0007669"/>
    <property type="project" value="UniProtKB-UniRule"/>
</dbReference>
<dbReference type="GO" id="GO:0006308">
    <property type="term" value="P:DNA catabolic process"/>
    <property type="evidence" value="ECO:0007669"/>
    <property type="project" value="UniProtKB-UniRule"/>
</dbReference>
<dbReference type="Gene3D" id="1.10.287.1040">
    <property type="entry name" value="Exonuclease VII, small subunit"/>
    <property type="match status" value="1"/>
</dbReference>
<dbReference type="HAMAP" id="MF_00337">
    <property type="entry name" value="Exonuc_7_S"/>
    <property type="match status" value="1"/>
</dbReference>
<dbReference type="InterPro" id="IPR003761">
    <property type="entry name" value="Exonuc_VII_S"/>
</dbReference>
<dbReference type="InterPro" id="IPR037004">
    <property type="entry name" value="Exonuc_VII_ssu_sf"/>
</dbReference>
<dbReference type="NCBIfam" id="NF002137">
    <property type="entry name" value="PRK00977.1-1"/>
    <property type="match status" value="1"/>
</dbReference>
<dbReference type="NCBIfam" id="NF002140">
    <property type="entry name" value="PRK00977.1-4"/>
    <property type="match status" value="1"/>
</dbReference>
<dbReference type="NCBIfam" id="TIGR01280">
    <property type="entry name" value="xseB"/>
    <property type="match status" value="1"/>
</dbReference>
<dbReference type="PANTHER" id="PTHR34137">
    <property type="entry name" value="EXODEOXYRIBONUCLEASE 7 SMALL SUBUNIT"/>
    <property type="match status" value="1"/>
</dbReference>
<dbReference type="PANTHER" id="PTHR34137:SF1">
    <property type="entry name" value="EXODEOXYRIBONUCLEASE 7 SMALL SUBUNIT"/>
    <property type="match status" value="1"/>
</dbReference>
<dbReference type="Pfam" id="PF02609">
    <property type="entry name" value="Exonuc_VII_S"/>
    <property type="match status" value="1"/>
</dbReference>
<dbReference type="PIRSF" id="PIRSF006488">
    <property type="entry name" value="Exonuc_VII_S"/>
    <property type="match status" value="1"/>
</dbReference>
<dbReference type="SUPFAM" id="SSF116842">
    <property type="entry name" value="XseB-like"/>
    <property type="match status" value="1"/>
</dbReference>
<gene>
    <name evidence="1" type="primary">xseB</name>
    <name type="ordered locus">VP0688</name>
</gene>
<name>EX7S_VIBPA</name>
<organism>
    <name type="scientific">Vibrio parahaemolyticus serotype O3:K6 (strain RIMD 2210633)</name>
    <dbReference type="NCBI Taxonomy" id="223926"/>
    <lineage>
        <taxon>Bacteria</taxon>
        <taxon>Pseudomonadati</taxon>
        <taxon>Pseudomonadota</taxon>
        <taxon>Gammaproteobacteria</taxon>
        <taxon>Vibrionales</taxon>
        <taxon>Vibrionaceae</taxon>
        <taxon>Vibrio</taxon>
    </lineage>
</organism>
<keyword id="KW-0963">Cytoplasm</keyword>
<keyword id="KW-0269">Exonuclease</keyword>
<keyword id="KW-0378">Hydrolase</keyword>
<keyword id="KW-0540">Nuclease</keyword>
<accession>Q87RT8</accession>